<reference key="1">
    <citation type="journal article" date="2008" name="DNA Res.">
        <title>Comparative genome analysis of Lactobacillus reuteri and Lactobacillus fermentum reveal a genomic island for reuterin and cobalamin production.</title>
        <authorList>
            <person name="Morita H."/>
            <person name="Toh H."/>
            <person name="Fukuda S."/>
            <person name="Horikawa H."/>
            <person name="Oshima K."/>
            <person name="Suzuki T."/>
            <person name="Murakami M."/>
            <person name="Hisamatsu S."/>
            <person name="Kato Y."/>
            <person name="Takizawa T."/>
            <person name="Fukuoka H."/>
            <person name="Yoshimura T."/>
            <person name="Itoh K."/>
            <person name="O'Sullivan D.J."/>
            <person name="McKay L.L."/>
            <person name="Ohno H."/>
            <person name="Kikuchi J."/>
            <person name="Masaoka T."/>
            <person name="Hattori M."/>
        </authorList>
    </citation>
    <scope>NUCLEOTIDE SEQUENCE [LARGE SCALE GENOMIC DNA]</scope>
    <source>
        <strain>NBRC 3956 / LMG 18251</strain>
    </source>
</reference>
<evidence type="ECO:0000255" key="1">
    <source>
        <dbReference type="HAMAP-Rule" id="MF_00137"/>
    </source>
</evidence>
<keyword id="KW-0067">ATP-binding</keyword>
<keyword id="KW-0436">Ligase</keyword>
<keyword id="KW-0547">Nucleotide-binding</keyword>
<keyword id="KW-0658">Purine biosynthesis</keyword>
<keyword id="KW-1185">Reference proteome</keyword>
<organism>
    <name type="scientific">Limosilactobacillus fermentum (strain NBRC 3956 / LMG 18251)</name>
    <name type="common">Lactobacillus fermentum</name>
    <dbReference type="NCBI Taxonomy" id="334390"/>
    <lineage>
        <taxon>Bacteria</taxon>
        <taxon>Bacillati</taxon>
        <taxon>Bacillota</taxon>
        <taxon>Bacilli</taxon>
        <taxon>Lactobacillales</taxon>
        <taxon>Lactobacillaceae</taxon>
        <taxon>Limosilactobacillus</taxon>
    </lineage>
</organism>
<gene>
    <name evidence="1" type="primary">purC</name>
    <name type="ordered locus">LAF_0124</name>
</gene>
<comment type="catalytic activity">
    <reaction evidence="1">
        <text>5-amino-1-(5-phospho-D-ribosyl)imidazole-4-carboxylate + L-aspartate + ATP = (2S)-2-[5-amino-1-(5-phospho-beta-D-ribosyl)imidazole-4-carboxamido]succinate + ADP + phosphate + 2 H(+)</text>
        <dbReference type="Rhea" id="RHEA:22628"/>
        <dbReference type="ChEBI" id="CHEBI:15378"/>
        <dbReference type="ChEBI" id="CHEBI:29991"/>
        <dbReference type="ChEBI" id="CHEBI:30616"/>
        <dbReference type="ChEBI" id="CHEBI:43474"/>
        <dbReference type="ChEBI" id="CHEBI:58443"/>
        <dbReference type="ChEBI" id="CHEBI:77657"/>
        <dbReference type="ChEBI" id="CHEBI:456216"/>
        <dbReference type="EC" id="6.3.2.6"/>
    </reaction>
</comment>
<comment type="pathway">
    <text evidence="1">Purine metabolism; IMP biosynthesis via de novo pathway; 5-amino-1-(5-phospho-D-ribosyl)imidazole-4-carboxamide from 5-amino-1-(5-phospho-D-ribosyl)imidazole-4-carboxylate: step 1/2.</text>
</comment>
<comment type="similarity">
    <text evidence="1">Belongs to the SAICAR synthetase family.</text>
</comment>
<accession>B2GF71</accession>
<feature type="chain" id="PRO_1000095991" description="Phosphoribosylaminoimidazole-succinocarboxamide synthase">
    <location>
        <begin position="1"/>
        <end position="240"/>
    </location>
</feature>
<protein>
    <recommendedName>
        <fullName evidence="1">Phosphoribosylaminoimidazole-succinocarboxamide synthase</fullName>
        <ecNumber evidence="1">6.3.2.6</ecNumber>
    </recommendedName>
    <alternativeName>
        <fullName evidence="1">SAICAR synthetase</fullName>
    </alternativeName>
</protein>
<dbReference type="EC" id="6.3.2.6" evidence="1"/>
<dbReference type="EMBL" id="AP008937">
    <property type="protein sequence ID" value="BAG26460.1"/>
    <property type="molecule type" value="Genomic_DNA"/>
</dbReference>
<dbReference type="RefSeq" id="WP_012390749.1">
    <property type="nucleotide sequence ID" value="NC_010610.1"/>
</dbReference>
<dbReference type="SMR" id="B2GF71"/>
<dbReference type="KEGG" id="lfe:LAF_0124"/>
<dbReference type="PATRIC" id="fig|334390.5.peg.130"/>
<dbReference type="eggNOG" id="COG0152">
    <property type="taxonomic scope" value="Bacteria"/>
</dbReference>
<dbReference type="HOGENOM" id="CLU_061495_2_0_9"/>
<dbReference type="UniPathway" id="UPA00074">
    <property type="reaction ID" value="UER00131"/>
</dbReference>
<dbReference type="Proteomes" id="UP000001697">
    <property type="component" value="Chromosome"/>
</dbReference>
<dbReference type="GO" id="GO:0005524">
    <property type="term" value="F:ATP binding"/>
    <property type="evidence" value="ECO:0007669"/>
    <property type="project" value="UniProtKB-KW"/>
</dbReference>
<dbReference type="GO" id="GO:0004639">
    <property type="term" value="F:phosphoribosylaminoimidazolesuccinocarboxamide synthase activity"/>
    <property type="evidence" value="ECO:0007669"/>
    <property type="project" value="UniProtKB-UniRule"/>
</dbReference>
<dbReference type="GO" id="GO:0006189">
    <property type="term" value="P:'de novo' IMP biosynthetic process"/>
    <property type="evidence" value="ECO:0007669"/>
    <property type="project" value="UniProtKB-UniRule"/>
</dbReference>
<dbReference type="GO" id="GO:0009236">
    <property type="term" value="P:cobalamin biosynthetic process"/>
    <property type="evidence" value="ECO:0007669"/>
    <property type="project" value="InterPro"/>
</dbReference>
<dbReference type="CDD" id="cd01415">
    <property type="entry name" value="SAICAR_synt_PurC"/>
    <property type="match status" value="1"/>
</dbReference>
<dbReference type="Gene3D" id="3.30.470.20">
    <property type="entry name" value="ATP-grasp fold, B domain"/>
    <property type="match status" value="1"/>
</dbReference>
<dbReference type="Gene3D" id="3.30.200.20">
    <property type="entry name" value="Phosphorylase Kinase, domain 1"/>
    <property type="match status" value="1"/>
</dbReference>
<dbReference type="HAMAP" id="MF_00137">
    <property type="entry name" value="SAICAR_synth"/>
    <property type="match status" value="1"/>
</dbReference>
<dbReference type="InterPro" id="IPR028923">
    <property type="entry name" value="SAICAR_synt/ADE2_N"/>
</dbReference>
<dbReference type="InterPro" id="IPR033934">
    <property type="entry name" value="SAICAR_synt_PurC"/>
</dbReference>
<dbReference type="InterPro" id="IPR050089">
    <property type="entry name" value="SAICAR_synthetase"/>
</dbReference>
<dbReference type="InterPro" id="IPR018236">
    <property type="entry name" value="SAICAR_synthetase_CS"/>
</dbReference>
<dbReference type="PANTHER" id="PTHR43599">
    <property type="entry name" value="MULTIFUNCTIONAL PROTEIN ADE2"/>
    <property type="match status" value="1"/>
</dbReference>
<dbReference type="PANTHER" id="PTHR43599:SF3">
    <property type="entry name" value="SI:DKEY-6E2.2"/>
    <property type="match status" value="1"/>
</dbReference>
<dbReference type="Pfam" id="PF01259">
    <property type="entry name" value="SAICAR_synt"/>
    <property type="match status" value="1"/>
</dbReference>
<dbReference type="SUPFAM" id="SSF56104">
    <property type="entry name" value="SAICAR synthase-like"/>
    <property type="match status" value="1"/>
</dbReference>
<dbReference type="PROSITE" id="PS01058">
    <property type="entry name" value="SAICAR_SYNTHETASE_2"/>
    <property type="match status" value="1"/>
</dbReference>
<sequence length="240" mass="27483">MEEKLLYAGKAKEMWTTEDEDQLRVVYLDQATQLNGKQKEHFAGKGAAAHAISDLVFHYLIDHGIETHFIKKLSATEDLVEKCAMVPLEFVTRNTVAGHFASRFGLEEGTALPQPVEENFYKDDELDDPFINESAAVALKMVTPAEFDRCWAICRQVDQLLTPLFEKAGMQLVDFKLEFGRRSRDNQIILADEFSPDNCRLWDTTTHHHLDKDVFRRNLADLTATYQEVYARLQAALKED</sequence>
<name>PUR7_LIMF3</name>
<proteinExistence type="inferred from homology"/>